<feature type="chain" id="PRO_0000153670" description="Prefoldin subunit alpha">
    <location>
        <begin position="1"/>
        <end position="137"/>
    </location>
</feature>
<accession>O28216</accession>
<name>PFDA_ARCFU</name>
<comment type="function">
    <text evidence="1">Molecular chaperone capable of stabilizing a range of proteins. Seems to fulfill an ATP-independent, HSP70-like function in archaeal de novo protein folding (By similarity).</text>
</comment>
<comment type="subunit">
    <text evidence="1">Heterohexamer of two alpha and four beta subunits.</text>
</comment>
<comment type="subcellular location">
    <subcellularLocation>
        <location evidence="1">Cytoplasm</location>
    </subcellularLocation>
</comment>
<comment type="similarity">
    <text evidence="2">Belongs to the prefoldin subunit alpha family.</text>
</comment>
<protein>
    <recommendedName>
        <fullName>Prefoldin subunit alpha</fullName>
    </recommendedName>
    <alternativeName>
        <fullName>GimC subunit alpha</fullName>
    </alternativeName>
</protein>
<keyword id="KW-0143">Chaperone</keyword>
<keyword id="KW-0963">Cytoplasm</keyword>
<keyword id="KW-1185">Reference proteome</keyword>
<proteinExistence type="inferred from homology"/>
<reference key="1">
    <citation type="journal article" date="1997" name="Nature">
        <title>The complete genome sequence of the hyperthermophilic, sulphate-reducing archaeon Archaeoglobus fulgidus.</title>
        <authorList>
            <person name="Klenk H.-P."/>
            <person name="Clayton R.A."/>
            <person name="Tomb J.-F."/>
            <person name="White O."/>
            <person name="Nelson K.E."/>
            <person name="Ketchum K.A."/>
            <person name="Dodson R.J."/>
            <person name="Gwinn M.L."/>
            <person name="Hickey E.K."/>
            <person name="Peterson J.D."/>
            <person name="Richardson D.L."/>
            <person name="Kerlavage A.R."/>
            <person name="Graham D.E."/>
            <person name="Kyrpides N.C."/>
            <person name="Fleischmann R.D."/>
            <person name="Quackenbush J."/>
            <person name="Lee N.H."/>
            <person name="Sutton G.G."/>
            <person name="Gill S.R."/>
            <person name="Kirkness E.F."/>
            <person name="Dougherty B.A."/>
            <person name="McKenney K."/>
            <person name="Adams M.D."/>
            <person name="Loftus B.J."/>
            <person name="Peterson S.N."/>
            <person name="Reich C.I."/>
            <person name="McNeil L.K."/>
            <person name="Badger J.H."/>
            <person name="Glodek A."/>
            <person name="Zhou L."/>
            <person name="Overbeek R."/>
            <person name="Gocayne J.D."/>
            <person name="Weidman J.F."/>
            <person name="McDonald L.A."/>
            <person name="Utterback T.R."/>
            <person name="Cotton M.D."/>
            <person name="Spriggs T."/>
            <person name="Artiach P."/>
            <person name="Kaine B.P."/>
            <person name="Sykes S.M."/>
            <person name="Sadow P.W."/>
            <person name="D'Andrea K.P."/>
            <person name="Bowman C."/>
            <person name="Fujii C."/>
            <person name="Garland S.A."/>
            <person name="Mason T.M."/>
            <person name="Olsen G.J."/>
            <person name="Fraser C.M."/>
            <person name="Smith H.O."/>
            <person name="Woese C.R."/>
            <person name="Venter J.C."/>
        </authorList>
    </citation>
    <scope>NUCLEOTIDE SEQUENCE [LARGE SCALE GENOMIC DNA]</scope>
    <source>
        <strain>ATCC 49558 / DSM 4304 / JCM 9628 / NBRC 100126 / VC-16</strain>
    </source>
</reference>
<gene>
    <name type="primary">pfdA</name>
    <name type="ordered locus">AF_2063</name>
</gene>
<organism>
    <name type="scientific">Archaeoglobus fulgidus (strain ATCC 49558 / DSM 4304 / JCM 9628 / NBRC 100126 / VC-16)</name>
    <dbReference type="NCBI Taxonomy" id="224325"/>
    <lineage>
        <taxon>Archaea</taxon>
        <taxon>Methanobacteriati</taxon>
        <taxon>Methanobacteriota</taxon>
        <taxon>Archaeoglobi</taxon>
        <taxon>Archaeoglobales</taxon>
        <taxon>Archaeoglobaceae</taxon>
        <taxon>Archaeoglobus</taxon>
    </lineage>
</organism>
<dbReference type="EMBL" id="AE000782">
    <property type="protein sequence ID" value="AAB89209.1"/>
    <property type="molecule type" value="Genomic_DNA"/>
</dbReference>
<dbReference type="PIR" id="F69507">
    <property type="entry name" value="F69507"/>
</dbReference>
<dbReference type="RefSeq" id="WP_010879555.1">
    <property type="nucleotide sequence ID" value="NC_000917.1"/>
</dbReference>
<dbReference type="SMR" id="O28216"/>
<dbReference type="STRING" id="224325.AF_2063"/>
<dbReference type="PaxDb" id="224325-AF_2063"/>
<dbReference type="EnsemblBacteria" id="AAB89209">
    <property type="protein sequence ID" value="AAB89209"/>
    <property type="gene ID" value="AF_2063"/>
</dbReference>
<dbReference type="GeneID" id="1485290"/>
<dbReference type="KEGG" id="afu:AF_2063"/>
<dbReference type="eggNOG" id="arCOG01341">
    <property type="taxonomic scope" value="Archaea"/>
</dbReference>
<dbReference type="HOGENOM" id="CLU_091867_1_4_2"/>
<dbReference type="OrthoDB" id="50487at2157"/>
<dbReference type="PhylomeDB" id="O28216"/>
<dbReference type="Proteomes" id="UP000002199">
    <property type="component" value="Chromosome"/>
</dbReference>
<dbReference type="GO" id="GO:0005737">
    <property type="term" value="C:cytoplasm"/>
    <property type="evidence" value="ECO:0007669"/>
    <property type="project" value="UniProtKB-SubCell"/>
</dbReference>
<dbReference type="GO" id="GO:0016272">
    <property type="term" value="C:prefoldin complex"/>
    <property type="evidence" value="ECO:0007669"/>
    <property type="project" value="UniProtKB-UniRule"/>
</dbReference>
<dbReference type="GO" id="GO:0051082">
    <property type="term" value="F:unfolded protein binding"/>
    <property type="evidence" value="ECO:0007669"/>
    <property type="project" value="UniProtKB-UniRule"/>
</dbReference>
<dbReference type="GO" id="GO:0006457">
    <property type="term" value="P:protein folding"/>
    <property type="evidence" value="ECO:0007669"/>
    <property type="project" value="UniProtKB-UniRule"/>
</dbReference>
<dbReference type="CDD" id="cd23160">
    <property type="entry name" value="Prefoldin_alpha_GimC"/>
    <property type="match status" value="1"/>
</dbReference>
<dbReference type="Gene3D" id="1.10.287.370">
    <property type="match status" value="1"/>
</dbReference>
<dbReference type="HAMAP" id="MF_00308">
    <property type="entry name" value="PfdA"/>
    <property type="match status" value="1"/>
</dbReference>
<dbReference type="InterPro" id="IPR011599">
    <property type="entry name" value="PFD_alpha_archaea"/>
</dbReference>
<dbReference type="InterPro" id="IPR009053">
    <property type="entry name" value="Prefoldin"/>
</dbReference>
<dbReference type="InterPro" id="IPR004127">
    <property type="entry name" value="Prefoldin_subunit_alpha"/>
</dbReference>
<dbReference type="NCBIfam" id="TIGR00293">
    <property type="entry name" value="prefoldin subunit alpha"/>
    <property type="match status" value="1"/>
</dbReference>
<dbReference type="PANTHER" id="PTHR12674">
    <property type="entry name" value="PREFOLDIN SUBUNIT 5"/>
    <property type="match status" value="1"/>
</dbReference>
<dbReference type="PANTHER" id="PTHR12674:SF2">
    <property type="entry name" value="PREFOLDIN SUBUNIT 5"/>
    <property type="match status" value="1"/>
</dbReference>
<dbReference type="Pfam" id="PF02996">
    <property type="entry name" value="Prefoldin"/>
    <property type="match status" value="1"/>
</dbReference>
<dbReference type="SUPFAM" id="SSF46579">
    <property type="entry name" value="Prefoldin"/>
    <property type="match status" value="1"/>
</dbReference>
<evidence type="ECO:0000250" key="1"/>
<evidence type="ECO:0000305" key="2"/>
<sequence>MSSEKEVQEKIATLQILQEEAEALQRRLMELEILENEYRKTLETLEFFESIDTSVEALMNLGGGVFAYVDVKNSKKMLVDIGSGVVVEREVGEAIEFVKNRIKKIEENQEKMTSMLQQVLSQAQRIQQELAARQQKE</sequence>